<sequence length="473" mass="52669">MSMKISEKKFNDRVGDGIQDSFMRGAVSSAQTRLYTNRLKAADELGNWEEWRELGEEIRQHTLENLDYYLMQLSENVSKRGGHVYFAKTKEEAAKYIQDVAKKKQAKKVVKSKSMVTEEISMNHALEEIGCEVLESDLGEYILQVDNDPPSHIIAPALHKNRTQIRDVFKEKLGYENSDDPYEMTKFVRKQLREKFMDAEIGVTGCNFAVANTGSLCLVTNEGNADLVMSIPKTQIAVMGMERMVPTMEELDVLVGLLCRSAVGQKLTSYVTVAGPIQEEEVDGPEEFHLVVVDNGRSQILGSEFRQVLQCIRCAACVNVCPVYRHVGGHSYGSIYSGPIGAVLTPLLGGYDDYKELPYASSLCGACTEACPVKIPLHDLLLKHRQVIVEQEGRAPLAEKLAMKMFSMGASSAALYKMGSKMAPAAMSPFTSGNRVSKGVGPLKNWTDIREFPAPSKERFRDWYKDHKKGGDK</sequence>
<keyword id="KW-0004">4Fe-4S</keyword>
<keyword id="KW-0249">Electron transport</keyword>
<keyword id="KW-0408">Iron</keyword>
<keyword id="KW-0411">Iron-sulfur</keyword>
<keyword id="KW-0479">Metal-binding</keyword>
<keyword id="KW-0677">Repeat</keyword>
<keyword id="KW-0813">Transport</keyword>
<proteinExistence type="inferred from homology"/>
<feature type="chain" id="PRO_0000383972" description="Lactate utilization protein B">
    <location>
        <begin position="1"/>
        <end position="473"/>
    </location>
</feature>
<feature type="domain" description="4Fe-4S ferredoxin-type 1" evidence="1">
    <location>
        <begin position="302"/>
        <end position="332"/>
    </location>
</feature>
<feature type="domain" description="4Fe-4S ferredoxin-type 2" evidence="1">
    <location>
        <begin position="351"/>
        <end position="380"/>
    </location>
</feature>
<feature type="binding site" evidence="1">
    <location>
        <position position="311"/>
    </location>
    <ligand>
        <name>[4Fe-4S] cluster</name>
        <dbReference type="ChEBI" id="CHEBI:49883"/>
        <label>1</label>
    </ligand>
</feature>
<feature type="binding site" evidence="1">
    <location>
        <position position="314"/>
    </location>
    <ligand>
        <name>[4Fe-4S] cluster</name>
        <dbReference type="ChEBI" id="CHEBI:49883"/>
        <label>1</label>
    </ligand>
</feature>
<feature type="binding site" evidence="1">
    <location>
        <position position="317"/>
    </location>
    <ligand>
        <name>[4Fe-4S] cluster</name>
        <dbReference type="ChEBI" id="CHEBI:49883"/>
        <label>1</label>
    </ligand>
</feature>
<feature type="binding site" evidence="1">
    <location>
        <position position="321"/>
    </location>
    <ligand>
        <name>[4Fe-4S] cluster</name>
        <dbReference type="ChEBI" id="CHEBI:49883"/>
        <label>2</label>
    </ligand>
</feature>
<feature type="binding site" evidence="1">
    <location>
        <position position="364"/>
    </location>
    <ligand>
        <name>[4Fe-4S] cluster</name>
        <dbReference type="ChEBI" id="CHEBI:49883"/>
        <label>2</label>
    </ligand>
</feature>
<feature type="binding site" evidence="1">
    <location>
        <position position="367"/>
    </location>
    <ligand>
        <name>[4Fe-4S] cluster</name>
        <dbReference type="ChEBI" id="CHEBI:49883"/>
        <label>2</label>
    </ligand>
</feature>
<feature type="binding site" evidence="1">
    <location>
        <position position="371"/>
    </location>
    <ligand>
        <name>[4Fe-4S] cluster</name>
        <dbReference type="ChEBI" id="CHEBI:49883"/>
        <label>1</label>
    </ligand>
</feature>
<comment type="function">
    <text evidence="1">Is involved in L-lactate degradation and allows cells to grow with lactate as the sole carbon source. Has probably a role as an electron transporter during oxidation of L-lactate.</text>
</comment>
<comment type="similarity">
    <text evidence="1">Belongs to the LutB/YkgF family.</text>
</comment>
<gene>
    <name evidence="1" type="primary">lutB</name>
    <name type="ordered locus">BCE33L1197</name>
</gene>
<evidence type="ECO:0000255" key="1">
    <source>
        <dbReference type="HAMAP-Rule" id="MF_02103"/>
    </source>
</evidence>
<protein>
    <recommendedName>
        <fullName evidence="1">Lactate utilization protein B</fullName>
    </recommendedName>
</protein>
<accession>Q63E66</accession>
<dbReference type="EMBL" id="CP000001">
    <property type="protein sequence ID" value="AAU19051.1"/>
    <property type="molecule type" value="Genomic_DNA"/>
</dbReference>
<dbReference type="RefSeq" id="WP_000061914.1">
    <property type="nucleotide sequence ID" value="NZ_CP009968.1"/>
</dbReference>
<dbReference type="KEGG" id="bcz:BCE33L1197"/>
<dbReference type="PATRIC" id="fig|288681.22.peg.4365"/>
<dbReference type="Proteomes" id="UP000002612">
    <property type="component" value="Chromosome"/>
</dbReference>
<dbReference type="GO" id="GO:0051539">
    <property type="term" value="F:4 iron, 4 sulfur cluster binding"/>
    <property type="evidence" value="ECO:0007669"/>
    <property type="project" value="UniProtKB-KW"/>
</dbReference>
<dbReference type="GO" id="GO:0046872">
    <property type="term" value="F:metal ion binding"/>
    <property type="evidence" value="ECO:0007669"/>
    <property type="project" value="UniProtKB-KW"/>
</dbReference>
<dbReference type="GO" id="GO:0006089">
    <property type="term" value="P:lactate metabolic process"/>
    <property type="evidence" value="ECO:0007669"/>
    <property type="project" value="UniProtKB-UniRule"/>
</dbReference>
<dbReference type="Gene3D" id="1.10.1060.10">
    <property type="entry name" value="Alpha-helical ferredoxin"/>
    <property type="match status" value="1"/>
</dbReference>
<dbReference type="Gene3D" id="3.40.50.10420">
    <property type="entry name" value="NagB/RpiA/CoA transferase-like"/>
    <property type="match status" value="1"/>
</dbReference>
<dbReference type="HAMAP" id="MF_02103">
    <property type="entry name" value="LutB"/>
    <property type="match status" value="1"/>
</dbReference>
<dbReference type="InterPro" id="IPR017896">
    <property type="entry name" value="4Fe4S_Fe-S-bd"/>
</dbReference>
<dbReference type="InterPro" id="IPR017900">
    <property type="entry name" value="4Fe4S_Fe_S_CS"/>
</dbReference>
<dbReference type="InterPro" id="IPR024185">
    <property type="entry name" value="FTHF_cligase-like_sf"/>
</dbReference>
<dbReference type="InterPro" id="IPR009051">
    <property type="entry name" value="Helical_ferredxn"/>
</dbReference>
<dbReference type="InterPro" id="IPR003741">
    <property type="entry name" value="LUD_dom"/>
</dbReference>
<dbReference type="InterPro" id="IPR022825">
    <property type="entry name" value="LutB"/>
</dbReference>
<dbReference type="InterPro" id="IPR004452">
    <property type="entry name" value="LutB/LldF"/>
</dbReference>
<dbReference type="InterPro" id="IPR024569">
    <property type="entry name" value="LutB_C"/>
</dbReference>
<dbReference type="InterPro" id="IPR037171">
    <property type="entry name" value="NagB/RpiA_transferase-like"/>
</dbReference>
<dbReference type="NCBIfam" id="TIGR00273">
    <property type="entry name" value="LutB/LldF family L-lactate oxidation iron-sulfur protein"/>
    <property type="match status" value="1"/>
</dbReference>
<dbReference type="PANTHER" id="PTHR47153">
    <property type="entry name" value="LACTATE UTILIZATION PROTEIN B"/>
    <property type="match status" value="1"/>
</dbReference>
<dbReference type="PANTHER" id="PTHR47153:SF2">
    <property type="entry name" value="LACTATE UTILIZATION PROTEIN B"/>
    <property type="match status" value="1"/>
</dbReference>
<dbReference type="Pfam" id="PF13183">
    <property type="entry name" value="Fer4_8"/>
    <property type="match status" value="1"/>
</dbReference>
<dbReference type="Pfam" id="PF02589">
    <property type="entry name" value="LUD_dom"/>
    <property type="match status" value="1"/>
</dbReference>
<dbReference type="Pfam" id="PF11870">
    <property type="entry name" value="LutB_C"/>
    <property type="match status" value="1"/>
</dbReference>
<dbReference type="SUPFAM" id="SSF46548">
    <property type="entry name" value="alpha-helical ferredoxin"/>
    <property type="match status" value="1"/>
</dbReference>
<dbReference type="SUPFAM" id="SSF100950">
    <property type="entry name" value="NagB/RpiA/CoA transferase-like"/>
    <property type="match status" value="1"/>
</dbReference>
<dbReference type="PROSITE" id="PS00198">
    <property type="entry name" value="4FE4S_FER_1"/>
    <property type="match status" value="1"/>
</dbReference>
<reference key="1">
    <citation type="journal article" date="2006" name="J. Bacteriol.">
        <title>Pathogenomic sequence analysis of Bacillus cereus and Bacillus thuringiensis isolates closely related to Bacillus anthracis.</title>
        <authorList>
            <person name="Han C.S."/>
            <person name="Xie G."/>
            <person name="Challacombe J.F."/>
            <person name="Altherr M.R."/>
            <person name="Bhotika S.S."/>
            <person name="Bruce D."/>
            <person name="Campbell C.S."/>
            <person name="Campbell M.L."/>
            <person name="Chen J."/>
            <person name="Chertkov O."/>
            <person name="Cleland C."/>
            <person name="Dimitrijevic M."/>
            <person name="Doggett N.A."/>
            <person name="Fawcett J.J."/>
            <person name="Glavina T."/>
            <person name="Goodwin L.A."/>
            <person name="Hill K.K."/>
            <person name="Hitchcock P."/>
            <person name="Jackson P.J."/>
            <person name="Keim P."/>
            <person name="Kewalramani A.R."/>
            <person name="Longmire J."/>
            <person name="Lucas S."/>
            <person name="Malfatti S."/>
            <person name="McMurry K."/>
            <person name="Meincke L.J."/>
            <person name="Misra M."/>
            <person name="Moseman B.L."/>
            <person name="Mundt M."/>
            <person name="Munk A.C."/>
            <person name="Okinaka R.T."/>
            <person name="Parson-Quintana B."/>
            <person name="Reilly L.P."/>
            <person name="Richardson P."/>
            <person name="Robinson D.L."/>
            <person name="Rubin E."/>
            <person name="Saunders E."/>
            <person name="Tapia R."/>
            <person name="Tesmer J.G."/>
            <person name="Thayer N."/>
            <person name="Thompson L.S."/>
            <person name="Tice H."/>
            <person name="Ticknor L.O."/>
            <person name="Wills P.L."/>
            <person name="Brettin T.S."/>
            <person name="Gilna P."/>
        </authorList>
    </citation>
    <scope>NUCLEOTIDE SEQUENCE [LARGE SCALE GENOMIC DNA]</scope>
    <source>
        <strain>ZK / E33L</strain>
    </source>
</reference>
<name>LUTB_BACCZ</name>
<organism>
    <name type="scientific">Bacillus cereus (strain ZK / E33L)</name>
    <dbReference type="NCBI Taxonomy" id="288681"/>
    <lineage>
        <taxon>Bacteria</taxon>
        <taxon>Bacillati</taxon>
        <taxon>Bacillota</taxon>
        <taxon>Bacilli</taxon>
        <taxon>Bacillales</taxon>
        <taxon>Bacillaceae</taxon>
        <taxon>Bacillus</taxon>
        <taxon>Bacillus cereus group</taxon>
    </lineage>
</organism>